<dbReference type="EC" id="6.3.2.2" evidence="1"/>
<dbReference type="EMBL" id="AE004437">
    <property type="protein sequence ID" value="AAG19718.1"/>
    <property type="molecule type" value="Genomic_DNA"/>
</dbReference>
<dbReference type="PIR" id="B84294">
    <property type="entry name" value="B84294"/>
</dbReference>
<dbReference type="RefSeq" id="WP_010903015.1">
    <property type="nucleotide sequence ID" value="NC_002607.1"/>
</dbReference>
<dbReference type="SMR" id="Q9HPZ9"/>
<dbReference type="STRING" id="64091.VNG_1397C"/>
<dbReference type="PaxDb" id="64091-VNG_1397C"/>
<dbReference type="KEGG" id="hal:VNG_1397C"/>
<dbReference type="PATRIC" id="fig|64091.14.peg.1067"/>
<dbReference type="HOGENOM" id="CLU_044848_1_0_2"/>
<dbReference type="InParanoid" id="Q9HPZ9"/>
<dbReference type="OrthoDB" id="287652at2157"/>
<dbReference type="PhylomeDB" id="Q9HPZ9"/>
<dbReference type="Proteomes" id="UP000000554">
    <property type="component" value="Chromosome"/>
</dbReference>
<dbReference type="GO" id="GO:0005524">
    <property type="term" value="F:ATP binding"/>
    <property type="evidence" value="ECO:0007669"/>
    <property type="project" value="UniProtKB-KW"/>
</dbReference>
<dbReference type="GO" id="GO:0004357">
    <property type="term" value="F:glutamate-cysteine ligase activity"/>
    <property type="evidence" value="ECO:0007669"/>
    <property type="project" value="UniProtKB-UniRule"/>
</dbReference>
<dbReference type="GO" id="GO:0016879">
    <property type="term" value="F:ligase activity, forming carbon-nitrogen bonds"/>
    <property type="evidence" value="ECO:0000318"/>
    <property type="project" value="GO_Central"/>
</dbReference>
<dbReference type="GO" id="GO:0042398">
    <property type="term" value="P:modified amino acid biosynthetic process"/>
    <property type="evidence" value="ECO:0007669"/>
    <property type="project" value="InterPro"/>
</dbReference>
<dbReference type="Gene3D" id="3.30.590.20">
    <property type="match status" value="1"/>
</dbReference>
<dbReference type="HAMAP" id="MF_01609">
    <property type="entry name" value="Glu_cys_ligase_2"/>
    <property type="match status" value="1"/>
</dbReference>
<dbReference type="InterPro" id="IPR050141">
    <property type="entry name" value="GCL_type2/YbdK_subfam"/>
</dbReference>
<dbReference type="InterPro" id="IPR006336">
    <property type="entry name" value="GCS2"/>
</dbReference>
<dbReference type="InterPro" id="IPR014746">
    <property type="entry name" value="Gln_synth/guanido_kin_cat_dom"/>
</dbReference>
<dbReference type="InterPro" id="IPR011793">
    <property type="entry name" value="YbdK"/>
</dbReference>
<dbReference type="NCBIfam" id="TIGR02050">
    <property type="entry name" value="gshA_cyan_rel"/>
    <property type="match status" value="1"/>
</dbReference>
<dbReference type="NCBIfam" id="NF010045">
    <property type="entry name" value="PRK13518.1"/>
    <property type="match status" value="1"/>
</dbReference>
<dbReference type="PANTHER" id="PTHR36510">
    <property type="entry name" value="GLUTAMATE--CYSTEINE LIGASE 2-RELATED"/>
    <property type="match status" value="1"/>
</dbReference>
<dbReference type="PANTHER" id="PTHR36510:SF1">
    <property type="entry name" value="GLUTAMATE--CYSTEINE LIGASE 2-RELATED"/>
    <property type="match status" value="1"/>
</dbReference>
<dbReference type="Pfam" id="PF04107">
    <property type="entry name" value="GCS2"/>
    <property type="match status" value="1"/>
</dbReference>
<dbReference type="SUPFAM" id="SSF55931">
    <property type="entry name" value="Glutamine synthetase/guanido kinase"/>
    <property type="match status" value="1"/>
</dbReference>
<reference key="1">
    <citation type="journal article" date="2000" name="Proc. Natl. Acad. Sci. U.S.A.">
        <title>Genome sequence of Halobacterium species NRC-1.</title>
        <authorList>
            <person name="Ng W.V."/>
            <person name="Kennedy S.P."/>
            <person name="Mahairas G.G."/>
            <person name="Berquist B."/>
            <person name="Pan M."/>
            <person name="Shukla H.D."/>
            <person name="Lasky S.R."/>
            <person name="Baliga N.S."/>
            <person name="Thorsson V."/>
            <person name="Sbrogna J."/>
            <person name="Swartzell S."/>
            <person name="Weir D."/>
            <person name="Hall J."/>
            <person name="Dahl T.A."/>
            <person name="Welti R."/>
            <person name="Goo Y.A."/>
            <person name="Leithauser B."/>
            <person name="Keller K."/>
            <person name="Cruz R."/>
            <person name="Danson M.J."/>
            <person name="Hough D.W."/>
            <person name="Maddocks D.G."/>
            <person name="Jablonski P.E."/>
            <person name="Krebs M.P."/>
            <person name="Angevine C.M."/>
            <person name="Dale H."/>
            <person name="Isenbarger T.A."/>
            <person name="Peck R.F."/>
            <person name="Pohlschroder M."/>
            <person name="Spudich J.L."/>
            <person name="Jung K.-H."/>
            <person name="Alam M."/>
            <person name="Freitas T."/>
            <person name="Hou S."/>
            <person name="Daniels C.J."/>
            <person name="Dennis P.P."/>
            <person name="Omer A.D."/>
            <person name="Ebhardt H."/>
            <person name="Lowe T.M."/>
            <person name="Liang P."/>
            <person name="Riley M."/>
            <person name="Hood L."/>
            <person name="DasSarma S."/>
        </authorList>
    </citation>
    <scope>NUCLEOTIDE SEQUENCE [LARGE SCALE GENOMIC DNA]</scope>
    <source>
        <strain>ATCC 700922 / JCM 11081 / NRC-1</strain>
    </source>
</reference>
<proteinExistence type="inferred from homology"/>
<organism>
    <name type="scientific">Halobacterium salinarum (strain ATCC 700922 / JCM 11081 / NRC-1)</name>
    <name type="common">Halobacterium halobium</name>
    <dbReference type="NCBI Taxonomy" id="64091"/>
    <lineage>
        <taxon>Archaea</taxon>
        <taxon>Methanobacteriati</taxon>
        <taxon>Methanobacteriota</taxon>
        <taxon>Stenosarchaea group</taxon>
        <taxon>Halobacteria</taxon>
        <taxon>Halobacteriales</taxon>
        <taxon>Halobacteriaceae</taxon>
        <taxon>Halobacterium</taxon>
        <taxon>Halobacterium salinarum NRC-34001</taxon>
    </lineage>
</organism>
<comment type="function">
    <text evidence="1">Catalyzes the synthesis of gamma-glutamylcysteine (gamma-GC), the main low-molecular-weight thiol compound instead of glutathione in halophilic archaea.</text>
</comment>
<comment type="catalytic activity">
    <reaction evidence="1">
        <text>L-cysteine + L-glutamate + ATP = gamma-L-glutamyl-L-cysteine + ADP + phosphate + H(+)</text>
        <dbReference type="Rhea" id="RHEA:13285"/>
        <dbReference type="ChEBI" id="CHEBI:15378"/>
        <dbReference type="ChEBI" id="CHEBI:29985"/>
        <dbReference type="ChEBI" id="CHEBI:30616"/>
        <dbReference type="ChEBI" id="CHEBI:35235"/>
        <dbReference type="ChEBI" id="CHEBI:43474"/>
        <dbReference type="ChEBI" id="CHEBI:58173"/>
        <dbReference type="ChEBI" id="CHEBI:456216"/>
        <dbReference type="EC" id="6.3.2.2"/>
    </reaction>
</comment>
<comment type="similarity">
    <text evidence="1">Belongs to the glutamate--cysteine ligase type 2 family. YbdK subfamily.</text>
</comment>
<protein>
    <recommendedName>
        <fullName evidence="1">Glutamate--cysteine ligase</fullName>
        <ecNumber evidence="1">6.3.2.2</ecNumber>
    </recommendedName>
    <alternativeName>
        <fullName evidence="1">Gamma-glutamylcysteine synthetase</fullName>
        <shortName evidence="1">GCS</shortName>
        <shortName evidence="1">Gamma-GCS</shortName>
    </alternativeName>
</protein>
<feature type="chain" id="PRO_0000218224" description="Glutamate--cysteine ligase">
    <location>
        <begin position="1"/>
        <end position="360"/>
    </location>
</feature>
<evidence type="ECO:0000255" key="1">
    <source>
        <dbReference type="HAMAP-Rule" id="MF_01609"/>
    </source>
</evidence>
<accession>Q9HPZ9</accession>
<name>GCS2_HALSA</name>
<gene>
    <name evidence="1" type="primary">gshA</name>
    <name type="ordered locus">VNG_1397C</name>
</gene>
<keyword id="KW-0067">ATP-binding</keyword>
<keyword id="KW-0436">Ligase</keyword>
<keyword id="KW-0547">Nucleotide-binding</keyword>
<keyword id="KW-1185">Reference proteome</keyword>
<sequence length="360" mass="40019">MDVGSPEAFSESGTLGVEEEFFVVDEHGVPTAGSDELVYEGEPPEPIAGRLDHELFKFVVETQTPTLNGVAEAPAAIREVRAALVAYASEHGLRIAGAGLHPGARWREHEHAEKPRYRSQLDRIQYPQHRNTTAGLHIHVGVDDPDKAVWVSNRMRWHMPVLLALSANSPYWNGFDTGLASARAKIFEGLPNTGLPTAFESYAAFQAFERRMVEHGGIEDRGELWYDVRPHSGHGTVEVRAPDAQADPAVVDAFVEYAHALVTEYAQRYDDHPDPFSVTGLRRELLDANKWRAMRDGHDASFVARETQGAVDLGTVVDRECDRLGVSGIRDVYDDVSGAQQQRRILDTHGEKRLYNHLSL</sequence>